<evidence type="ECO:0000255" key="1">
    <source>
        <dbReference type="HAMAP-Rule" id="MF_00116"/>
    </source>
</evidence>
<accession>B5RGE7</accession>
<gene>
    <name evidence="1" type="primary">dut</name>
    <name type="ordered locus">SG3700</name>
</gene>
<reference key="1">
    <citation type="journal article" date="2008" name="Genome Res.">
        <title>Comparative genome analysis of Salmonella enteritidis PT4 and Salmonella gallinarum 287/91 provides insights into evolutionary and host adaptation pathways.</title>
        <authorList>
            <person name="Thomson N.R."/>
            <person name="Clayton D.J."/>
            <person name="Windhorst D."/>
            <person name="Vernikos G."/>
            <person name="Davidson S."/>
            <person name="Churcher C."/>
            <person name="Quail M.A."/>
            <person name="Stevens M."/>
            <person name="Jones M.A."/>
            <person name="Watson M."/>
            <person name="Barron A."/>
            <person name="Layton A."/>
            <person name="Pickard D."/>
            <person name="Kingsley R.A."/>
            <person name="Bignell A."/>
            <person name="Clark L."/>
            <person name="Harris B."/>
            <person name="Ormond D."/>
            <person name="Abdellah Z."/>
            <person name="Brooks K."/>
            <person name="Cherevach I."/>
            <person name="Chillingworth T."/>
            <person name="Woodward J."/>
            <person name="Norberczak H."/>
            <person name="Lord A."/>
            <person name="Arrowsmith C."/>
            <person name="Jagels K."/>
            <person name="Moule S."/>
            <person name="Mungall K."/>
            <person name="Saunders M."/>
            <person name="Whitehead S."/>
            <person name="Chabalgoity J.A."/>
            <person name="Maskell D."/>
            <person name="Humphreys T."/>
            <person name="Roberts M."/>
            <person name="Barrow P.A."/>
            <person name="Dougan G."/>
            <person name="Parkhill J."/>
        </authorList>
    </citation>
    <scope>NUCLEOTIDE SEQUENCE [LARGE SCALE GENOMIC DNA]</scope>
    <source>
        <strain>287/91 / NCTC 13346</strain>
    </source>
</reference>
<keyword id="KW-0378">Hydrolase</keyword>
<keyword id="KW-0460">Magnesium</keyword>
<keyword id="KW-0479">Metal-binding</keyword>
<keyword id="KW-0546">Nucleotide metabolism</keyword>
<organism>
    <name type="scientific">Salmonella gallinarum (strain 287/91 / NCTC 13346)</name>
    <dbReference type="NCBI Taxonomy" id="550538"/>
    <lineage>
        <taxon>Bacteria</taxon>
        <taxon>Pseudomonadati</taxon>
        <taxon>Pseudomonadota</taxon>
        <taxon>Gammaproteobacteria</taxon>
        <taxon>Enterobacterales</taxon>
        <taxon>Enterobacteriaceae</taxon>
        <taxon>Salmonella</taxon>
    </lineage>
</organism>
<comment type="function">
    <text evidence="1">This enzyme is involved in nucleotide metabolism: it produces dUMP, the immediate precursor of thymidine nucleotides and it decreases the intracellular concentration of dUTP so that uracil cannot be incorporated into DNA.</text>
</comment>
<comment type="catalytic activity">
    <reaction evidence="1">
        <text>dUTP + H2O = dUMP + diphosphate + H(+)</text>
        <dbReference type="Rhea" id="RHEA:10248"/>
        <dbReference type="ChEBI" id="CHEBI:15377"/>
        <dbReference type="ChEBI" id="CHEBI:15378"/>
        <dbReference type="ChEBI" id="CHEBI:33019"/>
        <dbReference type="ChEBI" id="CHEBI:61555"/>
        <dbReference type="ChEBI" id="CHEBI:246422"/>
        <dbReference type="EC" id="3.6.1.23"/>
    </reaction>
</comment>
<comment type="cofactor">
    <cofactor evidence="1">
        <name>Mg(2+)</name>
        <dbReference type="ChEBI" id="CHEBI:18420"/>
    </cofactor>
</comment>
<comment type="pathway">
    <text evidence="1">Pyrimidine metabolism; dUMP biosynthesis; dUMP from dCTP (dUTP route): step 2/2.</text>
</comment>
<comment type="similarity">
    <text evidence="1">Belongs to the dUTPase family.</text>
</comment>
<dbReference type="EC" id="3.6.1.23" evidence="1"/>
<dbReference type="EMBL" id="AM933173">
    <property type="protein sequence ID" value="CAR39480.1"/>
    <property type="molecule type" value="Genomic_DNA"/>
</dbReference>
<dbReference type="SMR" id="B5RGE7"/>
<dbReference type="KEGG" id="seg:SG3700"/>
<dbReference type="HOGENOM" id="CLU_068508_1_1_6"/>
<dbReference type="UniPathway" id="UPA00610">
    <property type="reaction ID" value="UER00666"/>
</dbReference>
<dbReference type="Proteomes" id="UP000008321">
    <property type="component" value="Chromosome"/>
</dbReference>
<dbReference type="GO" id="GO:0004170">
    <property type="term" value="F:dUTP diphosphatase activity"/>
    <property type="evidence" value="ECO:0007669"/>
    <property type="project" value="UniProtKB-UniRule"/>
</dbReference>
<dbReference type="GO" id="GO:0000287">
    <property type="term" value="F:magnesium ion binding"/>
    <property type="evidence" value="ECO:0007669"/>
    <property type="project" value="UniProtKB-UniRule"/>
</dbReference>
<dbReference type="GO" id="GO:0006226">
    <property type="term" value="P:dUMP biosynthetic process"/>
    <property type="evidence" value="ECO:0007669"/>
    <property type="project" value="UniProtKB-UniRule"/>
</dbReference>
<dbReference type="GO" id="GO:0046081">
    <property type="term" value="P:dUTP catabolic process"/>
    <property type="evidence" value="ECO:0007669"/>
    <property type="project" value="InterPro"/>
</dbReference>
<dbReference type="CDD" id="cd07557">
    <property type="entry name" value="trimeric_dUTPase"/>
    <property type="match status" value="1"/>
</dbReference>
<dbReference type="FunFam" id="2.70.40.10:FF:000002">
    <property type="entry name" value="dUTP diphosphatase"/>
    <property type="match status" value="1"/>
</dbReference>
<dbReference type="Gene3D" id="2.70.40.10">
    <property type="match status" value="1"/>
</dbReference>
<dbReference type="HAMAP" id="MF_00116">
    <property type="entry name" value="dUTPase_bact"/>
    <property type="match status" value="1"/>
</dbReference>
<dbReference type="InterPro" id="IPR008181">
    <property type="entry name" value="dUTPase"/>
</dbReference>
<dbReference type="InterPro" id="IPR029054">
    <property type="entry name" value="dUTPase-like"/>
</dbReference>
<dbReference type="InterPro" id="IPR036157">
    <property type="entry name" value="dUTPase-like_sf"/>
</dbReference>
<dbReference type="InterPro" id="IPR033704">
    <property type="entry name" value="dUTPase_trimeric"/>
</dbReference>
<dbReference type="NCBIfam" id="TIGR00576">
    <property type="entry name" value="dut"/>
    <property type="match status" value="1"/>
</dbReference>
<dbReference type="NCBIfam" id="NF001862">
    <property type="entry name" value="PRK00601.1"/>
    <property type="match status" value="1"/>
</dbReference>
<dbReference type="PANTHER" id="PTHR11241">
    <property type="entry name" value="DEOXYURIDINE 5'-TRIPHOSPHATE NUCLEOTIDOHYDROLASE"/>
    <property type="match status" value="1"/>
</dbReference>
<dbReference type="PANTHER" id="PTHR11241:SF0">
    <property type="entry name" value="DEOXYURIDINE 5'-TRIPHOSPHATE NUCLEOTIDOHYDROLASE"/>
    <property type="match status" value="1"/>
</dbReference>
<dbReference type="Pfam" id="PF00692">
    <property type="entry name" value="dUTPase"/>
    <property type="match status" value="1"/>
</dbReference>
<dbReference type="SUPFAM" id="SSF51283">
    <property type="entry name" value="dUTPase-like"/>
    <property type="match status" value="1"/>
</dbReference>
<sequence length="151" mass="16036">MKKIDVKILDPRVGQQFPLPTYATSGSAGLDLRACLDDAVELAPGATTLVPTGLAIHIADPSLAAVMLPRSGLGHKHGIVLGNLVGLIDSDYQGQLMVSIWNRGQDSFTIEPGERIAQMVFVPVVQAEFNLVEAFDATERGEGGFGHSGRK</sequence>
<protein>
    <recommendedName>
        <fullName evidence="1">Deoxyuridine 5'-triphosphate nucleotidohydrolase</fullName>
        <shortName evidence="1">dUTPase</shortName>
        <ecNumber evidence="1">3.6.1.23</ecNumber>
    </recommendedName>
    <alternativeName>
        <fullName evidence="1">dUTP pyrophosphatase</fullName>
    </alternativeName>
</protein>
<proteinExistence type="inferred from homology"/>
<name>DUT_SALG2</name>
<feature type="chain" id="PRO_1000094989" description="Deoxyuridine 5'-triphosphate nucleotidohydrolase">
    <location>
        <begin position="1"/>
        <end position="151"/>
    </location>
</feature>
<feature type="binding site" evidence="1">
    <location>
        <begin position="70"/>
        <end position="72"/>
    </location>
    <ligand>
        <name>substrate</name>
    </ligand>
</feature>
<feature type="binding site" evidence="1">
    <location>
        <position position="83"/>
    </location>
    <ligand>
        <name>substrate</name>
    </ligand>
</feature>
<feature type="binding site" evidence="1">
    <location>
        <begin position="87"/>
        <end position="89"/>
    </location>
    <ligand>
        <name>substrate</name>
    </ligand>
</feature>
<feature type="binding site" evidence="1">
    <location>
        <position position="97"/>
    </location>
    <ligand>
        <name>substrate</name>
    </ligand>
</feature>